<keyword id="KW-0002">3D-structure</keyword>
<keyword id="KW-0051">Antiviral defense</keyword>
<keyword id="KW-0255">Endonuclease</keyword>
<keyword id="KW-0378">Hydrolase</keyword>
<keyword id="KW-0460">Magnesium</keyword>
<keyword id="KW-0479">Metal-binding</keyword>
<keyword id="KW-0540">Nuclease</keyword>
<keyword id="KW-1185">Reference proteome</keyword>
<name>CAS2_PYRFU</name>
<dbReference type="EC" id="3.1.-.-" evidence="1"/>
<dbReference type="EMBL" id="AE009950">
    <property type="protein sequence ID" value="AAL81241.1"/>
    <property type="molecule type" value="Genomic_DNA"/>
</dbReference>
<dbReference type="RefSeq" id="WP_014835332.1">
    <property type="nucleotide sequence ID" value="NZ_CP023154.1"/>
</dbReference>
<dbReference type="PDB" id="2I0X">
    <property type="method" value="X-ray"/>
    <property type="resolution" value="2.70 A"/>
    <property type="chains" value="A=1-85"/>
</dbReference>
<dbReference type="PDB" id="4TNO">
    <property type="method" value="X-ray"/>
    <property type="resolution" value="2.14 A"/>
    <property type="chains" value="A=1-85"/>
</dbReference>
<dbReference type="PDBsum" id="2I0X"/>
<dbReference type="PDBsum" id="4TNO"/>
<dbReference type="SMR" id="Q8U1T8"/>
<dbReference type="STRING" id="186497.PF1117"/>
<dbReference type="PaxDb" id="186497-PF1117"/>
<dbReference type="GeneID" id="41712926"/>
<dbReference type="KEGG" id="pfu:PF1117"/>
<dbReference type="PATRIC" id="fig|186497.12.peg.1178"/>
<dbReference type="eggNOG" id="arCOG04194">
    <property type="taxonomic scope" value="Archaea"/>
</dbReference>
<dbReference type="HOGENOM" id="CLU_161124_0_1_2"/>
<dbReference type="OrthoDB" id="43236at2157"/>
<dbReference type="PhylomeDB" id="Q8U1T8"/>
<dbReference type="EvolutionaryTrace" id="Q8U1T8"/>
<dbReference type="Proteomes" id="UP000001013">
    <property type="component" value="Chromosome"/>
</dbReference>
<dbReference type="GO" id="GO:0046872">
    <property type="term" value="F:metal ion binding"/>
    <property type="evidence" value="ECO:0007669"/>
    <property type="project" value="UniProtKB-UniRule"/>
</dbReference>
<dbReference type="GO" id="GO:0004521">
    <property type="term" value="F:RNA endonuclease activity"/>
    <property type="evidence" value="ECO:0007669"/>
    <property type="project" value="InterPro"/>
</dbReference>
<dbReference type="GO" id="GO:0051607">
    <property type="term" value="P:defense response to virus"/>
    <property type="evidence" value="ECO:0007669"/>
    <property type="project" value="UniProtKB-UniRule"/>
</dbReference>
<dbReference type="GO" id="GO:0043571">
    <property type="term" value="P:maintenance of CRISPR repeat elements"/>
    <property type="evidence" value="ECO:0007669"/>
    <property type="project" value="UniProtKB-UniRule"/>
</dbReference>
<dbReference type="CDD" id="cd09725">
    <property type="entry name" value="Cas2_I_II_III"/>
    <property type="match status" value="1"/>
</dbReference>
<dbReference type="Gene3D" id="3.30.70.240">
    <property type="match status" value="1"/>
</dbReference>
<dbReference type="HAMAP" id="MF_01471">
    <property type="entry name" value="Cas2"/>
    <property type="match status" value="1"/>
</dbReference>
<dbReference type="InterPro" id="IPR021127">
    <property type="entry name" value="CRISPR_associated_Cas2"/>
</dbReference>
<dbReference type="InterPro" id="IPR019199">
    <property type="entry name" value="Virulence_VapD/CRISPR_Cas2"/>
</dbReference>
<dbReference type="NCBIfam" id="TIGR01573">
    <property type="entry name" value="cas2"/>
    <property type="match status" value="1"/>
</dbReference>
<dbReference type="PANTHER" id="PTHR34405">
    <property type="entry name" value="CRISPR-ASSOCIATED ENDORIBONUCLEASE CAS2"/>
    <property type="match status" value="1"/>
</dbReference>
<dbReference type="PANTHER" id="PTHR34405:SF1">
    <property type="entry name" value="CRISPR-ASSOCIATED ENDORIBONUCLEASE CAS2"/>
    <property type="match status" value="1"/>
</dbReference>
<dbReference type="Pfam" id="PF09827">
    <property type="entry name" value="CRISPR_Cas2"/>
    <property type="match status" value="1"/>
</dbReference>
<dbReference type="SUPFAM" id="SSF143430">
    <property type="entry name" value="TTP0101/SSO1404-like"/>
    <property type="match status" value="1"/>
</dbReference>
<proteinExistence type="evidence at protein level"/>
<sequence length="85" mass="9979">MYIVVVYDVGVERVNKVKKFLRMHLNWVQNSVFEGEVTLAEFERIKEGLKKIIDENSDSVIIYKLRSMPPRETLGIEKNPIEEII</sequence>
<feature type="chain" id="PRO_0000417751" description="CRISPR-associated endoribonuclease Cas2">
    <location>
        <begin position="1"/>
        <end position="85"/>
    </location>
</feature>
<feature type="binding site" evidence="1">
    <location>
        <position position="8"/>
    </location>
    <ligand>
        <name>Mg(2+)</name>
        <dbReference type="ChEBI" id="CHEBI:18420"/>
        <note>catalytic</note>
    </ligand>
</feature>
<feature type="strand" evidence="3">
    <location>
        <begin position="2"/>
        <end position="8"/>
    </location>
</feature>
<feature type="turn" evidence="3">
    <location>
        <begin position="11"/>
        <end position="13"/>
    </location>
</feature>
<feature type="helix" evidence="3">
    <location>
        <begin position="14"/>
        <end position="21"/>
    </location>
</feature>
<feature type="turn" evidence="3">
    <location>
        <begin position="22"/>
        <end position="24"/>
    </location>
</feature>
<feature type="strand" evidence="3">
    <location>
        <begin position="25"/>
        <end position="29"/>
    </location>
</feature>
<feature type="strand" evidence="3">
    <location>
        <begin position="32"/>
        <end position="36"/>
    </location>
</feature>
<feature type="helix" evidence="3">
    <location>
        <begin position="39"/>
        <end position="52"/>
    </location>
</feature>
<feature type="turn" evidence="2">
    <location>
        <begin position="55"/>
        <end position="57"/>
    </location>
</feature>
<feature type="strand" evidence="3">
    <location>
        <begin position="59"/>
        <end position="67"/>
    </location>
</feature>
<feature type="turn" evidence="3">
    <location>
        <begin position="81"/>
        <end position="83"/>
    </location>
</feature>
<gene>
    <name evidence="1" type="primary">cas2</name>
    <name type="ordered locus">PF1117</name>
</gene>
<accession>Q8U1T8</accession>
<reference key="1">
    <citation type="journal article" date="1999" name="Genetics">
        <title>Divergence of the hyperthermophilic archaea Pyrococcus furiosus and P. horikoshii inferred from complete genomic sequences.</title>
        <authorList>
            <person name="Maeder D.L."/>
            <person name="Weiss R.B."/>
            <person name="Dunn D.M."/>
            <person name="Cherry J.L."/>
            <person name="Gonzalez J.M."/>
            <person name="DiRuggiero J."/>
            <person name="Robb F.T."/>
        </authorList>
    </citation>
    <scope>NUCLEOTIDE SEQUENCE [LARGE SCALE GENOMIC DNA]</scope>
    <source>
        <strain>ATCC 43587 / DSM 3638 / JCM 8422 / Vc1</strain>
    </source>
</reference>
<reference key="2">
    <citation type="submission" date="2006-08" db="PDB data bank">
        <title>Crystal structure of hypothetical protein Pf1117 from Pyrococcus furiosus.</title>
        <authorList>
            <consortium name="Southeast collaboratory for structural genomics (SECSG)"/>
            <person name="Chen L.Q."/>
            <person name="Fu Z.-Q."/>
            <person name="Hwang J."/>
            <person name="Chang J."/>
            <person name="Chen L."/>
            <person name="Wang Y."/>
            <person name="Zhang H."/>
            <person name="Liu Z.-J."/>
            <person name="Rose J.P."/>
            <person name="Wang B.C."/>
        </authorList>
    </citation>
    <scope>X-RAY CRYSTALLOGRAPHY (2.70 ANGSTROMS)</scope>
    <source>
        <strain>ATCC 43587 / DSM 3638 / JCM 8422 / Vc1</strain>
    </source>
</reference>
<comment type="function">
    <text evidence="1">CRISPR (clustered regularly interspaced short palindromic repeat), is an adaptive immune system that provides protection against mobile genetic elements (viruses, transposable elements and conjugative plasmids). CRISPR clusters contain sequences complementary to antecedent mobile elements and target invading nucleic acids. CRISPR clusters are transcribed and processed into CRISPR RNA (crRNA). Functions as a ssRNA-specific endoribonuclease. Involved in the integration of spacer DNA into the CRISPR cassette.</text>
</comment>
<comment type="cofactor">
    <cofactor evidence="1">
        <name>Mg(2+)</name>
        <dbReference type="ChEBI" id="CHEBI:18420"/>
    </cofactor>
</comment>
<comment type="subunit">
    <text evidence="1">Homodimer, forms a heterotetramer with a Cas1 homodimer.</text>
</comment>
<comment type="similarity">
    <text evidence="1">Belongs to the CRISPR-associated endoribonuclease Cas2 protein family.</text>
</comment>
<organism>
    <name type="scientific">Pyrococcus furiosus (strain ATCC 43587 / DSM 3638 / JCM 8422 / Vc1)</name>
    <dbReference type="NCBI Taxonomy" id="186497"/>
    <lineage>
        <taxon>Archaea</taxon>
        <taxon>Methanobacteriati</taxon>
        <taxon>Methanobacteriota</taxon>
        <taxon>Thermococci</taxon>
        <taxon>Thermococcales</taxon>
        <taxon>Thermococcaceae</taxon>
        <taxon>Pyrococcus</taxon>
    </lineage>
</organism>
<evidence type="ECO:0000255" key="1">
    <source>
        <dbReference type="HAMAP-Rule" id="MF_01471"/>
    </source>
</evidence>
<evidence type="ECO:0007829" key="2">
    <source>
        <dbReference type="PDB" id="2I0X"/>
    </source>
</evidence>
<evidence type="ECO:0007829" key="3">
    <source>
        <dbReference type="PDB" id="4TNO"/>
    </source>
</evidence>
<protein>
    <recommendedName>
        <fullName evidence="1">CRISPR-associated endoribonuclease Cas2</fullName>
        <ecNumber evidence="1">3.1.-.-</ecNumber>
    </recommendedName>
</protein>